<dbReference type="EC" id="7.1.1.-" evidence="1"/>
<dbReference type="EMBL" id="AF383848">
    <property type="protein sequence ID" value="AAN61789.1"/>
    <property type="molecule type" value="Genomic_DNA"/>
</dbReference>
<dbReference type="SMR" id="Q8HVL5"/>
<dbReference type="GO" id="GO:0009535">
    <property type="term" value="C:chloroplast thylakoid membrane"/>
    <property type="evidence" value="ECO:0007669"/>
    <property type="project" value="UniProtKB-SubCell"/>
</dbReference>
<dbReference type="GO" id="GO:0051539">
    <property type="term" value="F:4 iron, 4 sulfur cluster binding"/>
    <property type="evidence" value="ECO:0007669"/>
    <property type="project" value="UniProtKB-KW"/>
</dbReference>
<dbReference type="GO" id="GO:0005506">
    <property type="term" value="F:iron ion binding"/>
    <property type="evidence" value="ECO:0007669"/>
    <property type="project" value="UniProtKB-UniRule"/>
</dbReference>
<dbReference type="GO" id="GO:0008137">
    <property type="term" value="F:NADH dehydrogenase (ubiquinone) activity"/>
    <property type="evidence" value="ECO:0007669"/>
    <property type="project" value="InterPro"/>
</dbReference>
<dbReference type="GO" id="GO:0048038">
    <property type="term" value="F:quinone binding"/>
    <property type="evidence" value="ECO:0007669"/>
    <property type="project" value="UniProtKB-KW"/>
</dbReference>
<dbReference type="GO" id="GO:0019684">
    <property type="term" value="P:photosynthesis, light reaction"/>
    <property type="evidence" value="ECO:0007669"/>
    <property type="project" value="UniProtKB-UniRule"/>
</dbReference>
<dbReference type="FunFam" id="3.30.70.3270:FF:000006">
    <property type="entry name" value="NAD(P)H-quinone oxidoreductase subunit I, chloroplastic"/>
    <property type="match status" value="1"/>
</dbReference>
<dbReference type="Gene3D" id="3.30.70.3270">
    <property type="match status" value="1"/>
</dbReference>
<dbReference type="HAMAP" id="MF_01351">
    <property type="entry name" value="NDH1_NuoI"/>
    <property type="match status" value="1"/>
</dbReference>
<dbReference type="InterPro" id="IPR017896">
    <property type="entry name" value="4Fe4S_Fe-S-bd"/>
</dbReference>
<dbReference type="InterPro" id="IPR017900">
    <property type="entry name" value="4Fe4S_Fe_S_CS"/>
</dbReference>
<dbReference type="InterPro" id="IPR010226">
    <property type="entry name" value="NADH_quinone_OxRdtase_chainI"/>
</dbReference>
<dbReference type="InterPro" id="IPR004497">
    <property type="entry name" value="NDHI"/>
</dbReference>
<dbReference type="NCBIfam" id="TIGR00403">
    <property type="entry name" value="ndhI"/>
    <property type="match status" value="1"/>
</dbReference>
<dbReference type="NCBIfam" id="TIGR01971">
    <property type="entry name" value="NuoI"/>
    <property type="match status" value="1"/>
</dbReference>
<dbReference type="NCBIfam" id="NF004537">
    <property type="entry name" value="PRK05888.1-3"/>
    <property type="match status" value="1"/>
</dbReference>
<dbReference type="PANTHER" id="PTHR47275">
    <property type="entry name" value="NAD(P)H-QUINONE OXIDOREDUCTASE SUBUNIT I, CHLOROPLASTIC"/>
    <property type="match status" value="1"/>
</dbReference>
<dbReference type="PANTHER" id="PTHR47275:SF1">
    <property type="entry name" value="NAD(P)H-QUINONE OXIDOREDUCTASE SUBUNIT I, CHLOROPLASTIC"/>
    <property type="match status" value="1"/>
</dbReference>
<dbReference type="Pfam" id="PF00037">
    <property type="entry name" value="Fer4"/>
    <property type="match status" value="2"/>
</dbReference>
<dbReference type="SUPFAM" id="SSF54862">
    <property type="entry name" value="4Fe-4S ferredoxins"/>
    <property type="match status" value="1"/>
</dbReference>
<dbReference type="PROSITE" id="PS00198">
    <property type="entry name" value="4FE4S_FER_1"/>
    <property type="match status" value="2"/>
</dbReference>
<dbReference type="PROSITE" id="PS51379">
    <property type="entry name" value="4FE4S_FER_2"/>
    <property type="match status" value="2"/>
</dbReference>
<evidence type="ECO:0000255" key="1">
    <source>
        <dbReference type="HAMAP-Rule" id="MF_01351"/>
    </source>
</evidence>
<accession>Q8HVL5</accession>
<feature type="chain" id="PRO_0000250847" description="NAD(P)H-quinone oxidoreductase subunit I, chloroplastic">
    <location>
        <begin position="1"/>
        <end position="166"/>
    </location>
</feature>
<feature type="domain" description="4Fe-4S ferredoxin-type 1" evidence="1">
    <location>
        <begin position="55"/>
        <end position="84"/>
    </location>
</feature>
<feature type="domain" description="4Fe-4S ferredoxin-type 2" evidence="1">
    <location>
        <begin position="95"/>
        <end position="124"/>
    </location>
</feature>
<feature type="binding site" evidence="1">
    <location>
        <position position="64"/>
    </location>
    <ligand>
        <name>[4Fe-4S] cluster</name>
        <dbReference type="ChEBI" id="CHEBI:49883"/>
        <label>1</label>
    </ligand>
</feature>
<feature type="binding site" evidence="1">
    <location>
        <position position="67"/>
    </location>
    <ligand>
        <name>[4Fe-4S] cluster</name>
        <dbReference type="ChEBI" id="CHEBI:49883"/>
        <label>1</label>
    </ligand>
</feature>
<feature type="binding site" evidence="1">
    <location>
        <position position="70"/>
    </location>
    <ligand>
        <name>[4Fe-4S] cluster</name>
        <dbReference type="ChEBI" id="CHEBI:49883"/>
        <label>1</label>
    </ligand>
</feature>
<feature type="binding site" evidence="1">
    <location>
        <position position="74"/>
    </location>
    <ligand>
        <name>[4Fe-4S] cluster</name>
        <dbReference type="ChEBI" id="CHEBI:49883"/>
        <label>2</label>
    </ligand>
</feature>
<feature type="binding site" evidence="1">
    <location>
        <position position="104"/>
    </location>
    <ligand>
        <name>[4Fe-4S] cluster</name>
        <dbReference type="ChEBI" id="CHEBI:49883"/>
        <label>2</label>
    </ligand>
</feature>
<feature type="binding site" evidence="1">
    <location>
        <position position="107"/>
    </location>
    <ligand>
        <name>[4Fe-4S] cluster</name>
        <dbReference type="ChEBI" id="CHEBI:49883"/>
        <label>2</label>
    </ligand>
</feature>
<feature type="binding site" evidence="1">
    <location>
        <position position="110"/>
    </location>
    <ligand>
        <name>[4Fe-4S] cluster</name>
        <dbReference type="ChEBI" id="CHEBI:49883"/>
        <label>2</label>
    </ligand>
</feature>
<feature type="binding site" evidence="1">
    <location>
        <position position="114"/>
    </location>
    <ligand>
        <name>[4Fe-4S] cluster</name>
        <dbReference type="ChEBI" id="CHEBI:49883"/>
        <label>1</label>
    </ligand>
</feature>
<gene>
    <name evidence="1" type="primary">ndhI</name>
</gene>
<reference key="1">
    <citation type="submission" date="2003-01" db="EMBL/GenBank/DDBJ databases">
        <title>Chloroplast DNA phylogeny of tribe Heliantheae (Asteraceae).</title>
        <authorList>
            <person name="Panero J.L."/>
            <person name="Baldwin B.G."/>
            <person name="Schilling E.E."/>
            <person name="Clevinger J.A."/>
        </authorList>
    </citation>
    <scope>NUCLEOTIDE SEQUENCE [GENOMIC DNA]</scope>
</reference>
<protein>
    <recommendedName>
        <fullName evidence="1">NAD(P)H-quinone oxidoreductase subunit I, chloroplastic</fullName>
        <ecNumber evidence="1">7.1.1.-</ecNumber>
    </recommendedName>
    <alternativeName>
        <fullName evidence="1">NAD(P)H dehydrogenase subunit I</fullName>
        <shortName evidence="1">NDH subunit I</shortName>
    </alternativeName>
    <alternativeName>
        <fullName evidence="1">NADH-plastoquinone oxidoreductase subunit I</fullName>
    </alternativeName>
</protein>
<organism>
    <name type="scientific">Rumfordia penninervis</name>
    <name type="common">Mexican daisy</name>
    <dbReference type="NCBI Taxonomy" id="183074"/>
    <lineage>
        <taxon>Eukaryota</taxon>
        <taxon>Viridiplantae</taxon>
        <taxon>Streptophyta</taxon>
        <taxon>Embryophyta</taxon>
        <taxon>Tracheophyta</taxon>
        <taxon>Spermatophyta</taxon>
        <taxon>Magnoliopsida</taxon>
        <taxon>eudicotyledons</taxon>
        <taxon>Gunneridae</taxon>
        <taxon>Pentapetalae</taxon>
        <taxon>asterids</taxon>
        <taxon>campanulids</taxon>
        <taxon>Asterales</taxon>
        <taxon>Asteraceae</taxon>
        <taxon>Asteroideae</taxon>
        <taxon>Heliantheae alliance</taxon>
        <taxon>Millerieae</taxon>
        <taxon>Rumfordia</taxon>
    </lineage>
</organism>
<name>NDHI_RUMPE</name>
<comment type="function">
    <text evidence="1">NDH shuttles electrons from NAD(P)H:plastoquinone, via FMN and iron-sulfur (Fe-S) centers, to quinones in the photosynthetic chain and possibly in a chloroplast respiratory chain. The immediate electron acceptor for the enzyme in this species is believed to be plastoquinone. Couples the redox reaction to proton translocation, and thus conserves the redox energy in a proton gradient.</text>
</comment>
<comment type="catalytic activity">
    <reaction evidence="1">
        <text>a plastoquinone + NADH + (n+1) H(+)(in) = a plastoquinol + NAD(+) + n H(+)(out)</text>
        <dbReference type="Rhea" id="RHEA:42608"/>
        <dbReference type="Rhea" id="RHEA-COMP:9561"/>
        <dbReference type="Rhea" id="RHEA-COMP:9562"/>
        <dbReference type="ChEBI" id="CHEBI:15378"/>
        <dbReference type="ChEBI" id="CHEBI:17757"/>
        <dbReference type="ChEBI" id="CHEBI:57540"/>
        <dbReference type="ChEBI" id="CHEBI:57945"/>
        <dbReference type="ChEBI" id="CHEBI:62192"/>
    </reaction>
</comment>
<comment type="catalytic activity">
    <reaction evidence="1">
        <text>a plastoquinone + NADPH + (n+1) H(+)(in) = a plastoquinol + NADP(+) + n H(+)(out)</text>
        <dbReference type="Rhea" id="RHEA:42612"/>
        <dbReference type="Rhea" id="RHEA-COMP:9561"/>
        <dbReference type="Rhea" id="RHEA-COMP:9562"/>
        <dbReference type="ChEBI" id="CHEBI:15378"/>
        <dbReference type="ChEBI" id="CHEBI:17757"/>
        <dbReference type="ChEBI" id="CHEBI:57783"/>
        <dbReference type="ChEBI" id="CHEBI:58349"/>
        <dbReference type="ChEBI" id="CHEBI:62192"/>
    </reaction>
</comment>
<comment type="cofactor">
    <cofactor evidence="1">
        <name>[4Fe-4S] cluster</name>
        <dbReference type="ChEBI" id="CHEBI:49883"/>
    </cofactor>
    <text evidence="1">Binds 2 [4Fe-4S] clusters per subunit.</text>
</comment>
<comment type="subunit">
    <text evidence="1">NDH is composed of at least 16 different subunits, 5 of which are encoded in the nucleus.</text>
</comment>
<comment type="subcellular location">
    <subcellularLocation>
        <location evidence="1">Plastid</location>
        <location evidence="1">Chloroplast thylakoid membrane</location>
        <topology evidence="1">Peripheral membrane protein</topology>
    </subcellularLocation>
</comment>
<comment type="similarity">
    <text evidence="1">Belongs to the complex I 23 kDa subunit family.</text>
</comment>
<geneLocation type="chloroplast"/>
<sequence length="166" mass="19475">MFPMVTEFMNYGQQTVRAARYIGQGFMITLSHANRLPVTIQYPYEKLITSERFRGRIHFEFDKCIACEVCVRVCPIDLPVVDWKLETDIRKKRLLNYSIDFGICIFCGNCVEYCPTNCLSMTEEYELSTYDRHELNYNQIALGRLPMSIIDDYTIRTILNLPEIKT</sequence>
<keyword id="KW-0004">4Fe-4S</keyword>
<keyword id="KW-0150">Chloroplast</keyword>
<keyword id="KW-0408">Iron</keyword>
<keyword id="KW-0411">Iron-sulfur</keyword>
<keyword id="KW-0472">Membrane</keyword>
<keyword id="KW-0479">Metal-binding</keyword>
<keyword id="KW-0520">NAD</keyword>
<keyword id="KW-0521">NADP</keyword>
<keyword id="KW-0934">Plastid</keyword>
<keyword id="KW-0618">Plastoquinone</keyword>
<keyword id="KW-0874">Quinone</keyword>
<keyword id="KW-0677">Repeat</keyword>
<keyword id="KW-0793">Thylakoid</keyword>
<keyword id="KW-1278">Translocase</keyword>
<proteinExistence type="inferred from homology"/>